<gene>
    <name evidence="1" type="primary">nuoH</name>
    <name type="ordered locus">SPO2772</name>
</gene>
<protein>
    <recommendedName>
        <fullName evidence="1">NADH-quinone oxidoreductase subunit H</fullName>
        <ecNumber evidence="1">7.1.1.-</ecNumber>
    </recommendedName>
    <alternativeName>
        <fullName evidence="1">NADH dehydrogenase I subunit H</fullName>
    </alternativeName>
    <alternativeName>
        <fullName evidence="1">NDH-1 subunit H</fullName>
    </alternativeName>
</protein>
<reference key="1">
    <citation type="journal article" date="2004" name="Nature">
        <title>Genome sequence of Silicibacter pomeroyi reveals adaptations to the marine environment.</title>
        <authorList>
            <person name="Moran M.A."/>
            <person name="Buchan A."/>
            <person name="Gonzalez J.M."/>
            <person name="Heidelberg J.F."/>
            <person name="Whitman W.B."/>
            <person name="Kiene R.P."/>
            <person name="Henriksen J.R."/>
            <person name="King G.M."/>
            <person name="Belas R."/>
            <person name="Fuqua C."/>
            <person name="Brinkac L.M."/>
            <person name="Lewis M."/>
            <person name="Johri S."/>
            <person name="Weaver B."/>
            <person name="Pai G."/>
            <person name="Eisen J.A."/>
            <person name="Rahe E."/>
            <person name="Sheldon W.M."/>
            <person name="Ye W."/>
            <person name="Miller T.R."/>
            <person name="Carlton J."/>
            <person name="Rasko D.A."/>
            <person name="Paulsen I.T."/>
            <person name="Ren Q."/>
            <person name="Daugherty S.C."/>
            <person name="DeBoy R.T."/>
            <person name="Dodson R.J."/>
            <person name="Durkin A.S."/>
            <person name="Madupu R."/>
            <person name="Nelson W.C."/>
            <person name="Sullivan S.A."/>
            <person name="Rosovitz M.J."/>
            <person name="Haft D.H."/>
            <person name="Selengut J."/>
            <person name="Ward N."/>
        </authorList>
    </citation>
    <scope>NUCLEOTIDE SEQUENCE [LARGE SCALE GENOMIC DNA]</scope>
    <source>
        <strain>ATCC 700808 / DSM 15171 / DSS-3</strain>
    </source>
</reference>
<reference key="2">
    <citation type="journal article" date="2014" name="Stand. Genomic Sci.">
        <title>An updated genome annotation for the model marine bacterium Ruegeria pomeroyi DSS-3.</title>
        <authorList>
            <person name="Rivers A.R."/>
            <person name="Smith C.B."/>
            <person name="Moran M.A."/>
        </authorList>
    </citation>
    <scope>GENOME REANNOTATION</scope>
    <source>
        <strain>ATCC 700808 / DSM 15171 / DSS-3</strain>
    </source>
</reference>
<name>NUOH_RUEPO</name>
<evidence type="ECO:0000255" key="1">
    <source>
        <dbReference type="HAMAP-Rule" id="MF_01350"/>
    </source>
</evidence>
<dbReference type="EC" id="7.1.1.-" evidence="1"/>
<dbReference type="EMBL" id="CP000031">
    <property type="protein sequence ID" value="AAV96013.1"/>
    <property type="molecule type" value="Genomic_DNA"/>
</dbReference>
<dbReference type="RefSeq" id="WP_011048471.1">
    <property type="nucleotide sequence ID" value="NC_003911.12"/>
</dbReference>
<dbReference type="SMR" id="Q5LPS7"/>
<dbReference type="STRING" id="246200.SPO2772"/>
<dbReference type="PaxDb" id="246200-SPO2772"/>
<dbReference type="KEGG" id="sil:SPO2772"/>
<dbReference type="eggNOG" id="COG1005">
    <property type="taxonomic scope" value="Bacteria"/>
</dbReference>
<dbReference type="HOGENOM" id="CLU_015134_0_1_5"/>
<dbReference type="OrthoDB" id="9803734at2"/>
<dbReference type="Proteomes" id="UP000001023">
    <property type="component" value="Chromosome"/>
</dbReference>
<dbReference type="GO" id="GO:0005886">
    <property type="term" value="C:plasma membrane"/>
    <property type="evidence" value="ECO:0007669"/>
    <property type="project" value="UniProtKB-SubCell"/>
</dbReference>
<dbReference type="GO" id="GO:0003954">
    <property type="term" value="F:NADH dehydrogenase activity"/>
    <property type="evidence" value="ECO:0007669"/>
    <property type="project" value="TreeGrafter"/>
</dbReference>
<dbReference type="GO" id="GO:0016655">
    <property type="term" value="F:oxidoreductase activity, acting on NAD(P)H, quinone or similar compound as acceptor"/>
    <property type="evidence" value="ECO:0007669"/>
    <property type="project" value="UniProtKB-UniRule"/>
</dbReference>
<dbReference type="GO" id="GO:0048038">
    <property type="term" value="F:quinone binding"/>
    <property type="evidence" value="ECO:0007669"/>
    <property type="project" value="UniProtKB-KW"/>
</dbReference>
<dbReference type="GO" id="GO:0009060">
    <property type="term" value="P:aerobic respiration"/>
    <property type="evidence" value="ECO:0007669"/>
    <property type="project" value="TreeGrafter"/>
</dbReference>
<dbReference type="HAMAP" id="MF_01350">
    <property type="entry name" value="NDH1_NuoH"/>
    <property type="match status" value="1"/>
</dbReference>
<dbReference type="InterPro" id="IPR001694">
    <property type="entry name" value="NADH_UbQ_OxRdtase_su1/FPO"/>
</dbReference>
<dbReference type="InterPro" id="IPR018086">
    <property type="entry name" value="NADH_UbQ_OxRdtase_su1_CS"/>
</dbReference>
<dbReference type="NCBIfam" id="NF004741">
    <property type="entry name" value="PRK06076.1-2"/>
    <property type="match status" value="1"/>
</dbReference>
<dbReference type="NCBIfam" id="NF004745">
    <property type="entry name" value="PRK06076.1-6"/>
    <property type="match status" value="1"/>
</dbReference>
<dbReference type="PANTHER" id="PTHR11432">
    <property type="entry name" value="NADH DEHYDROGENASE SUBUNIT 1"/>
    <property type="match status" value="1"/>
</dbReference>
<dbReference type="PANTHER" id="PTHR11432:SF3">
    <property type="entry name" value="NADH-UBIQUINONE OXIDOREDUCTASE CHAIN 1"/>
    <property type="match status" value="1"/>
</dbReference>
<dbReference type="Pfam" id="PF00146">
    <property type="entry name" value="NADHdh"/>
    <property type="match status" value="1"/>
</dbReference>
<dbReference type="PROSITE" id="PS00667">
    <property type="entry name" value="COMPLEX1_ND1_1"/>
    <property type="match status" value="1"/>
</dbReference>
<dbReference type="PROSITE" id="PS00668">
    <property type="entry name" value="COMPLEX1_ND1_2"/>
    <property type="match status" value="1"/>
</dbReference>
<organism>
    <name type="scientific">Ruegeria pomeroyi (strain ATCC 700808 / DSM 15171 / DSS-3)</name>
    <name type="common">Silicibacter pomeroyi</name>
    <dbReference type="NCBI Taxonomy" id="246200"/>
    <lineage>
        <taxon>Bacteria</taxon>
        <taxon>Pseudomonadati</taxon>
        <taxon>Pseudomonadota</taxon>
        <taxon>Alphaproteobacteria</taxon>
        <taxon>Rhodobacterales</taxon>
        <taxon>Roseobacteraceae</taxon>
        <taxon>Ruegeria</taxon>
    </lineage>
</organism>
<accession>Q5LPS7</accession>
<sequence>MAEFFDTPGGIALIILAQVLAVVAFVMISLLFLVYGDRKIWAAVQMRRGPNVVGVYGLLQSVADALKYVVKEVVIPAGADRTVFILAPMTSFVLAMIAWAVIPFNDGWVLSDINVAILYVFAVSSLEVYGVIMGGWASNSKYPFLGSLRSAAQMISYEVSIGLIIIGVILSTGSMNFGDIVRAQDTGWGFFGWYWLPHFPMVFLFFISALAETNRPPFDLPEAESELVAGYQVEYSATPFLLFMAGEYIAIFLMCALTSLLFFGGWLSPIPGLPDGVLWMVAKMAFFFFIFAMVKAITPRYRYDQLMRLGWKVFLPFSLVWVVFVAFAAKFDWFWGAFARWSVGG</sequence>
<proteinExistence type="inferred from homology"/>
<comment type="function">
    <text evidence="1">NDH-1 shuttles electrons from NADH, via FMN and iron-sulfur (Fe-S) centers, to quinones in the respiratory chain. The immediate electron acceptor for the enzyme in this species is believed to be ubiquinone. Couples the redox reaction to proton translocation (for every two electrons transferred, four hydrogen ions are translocated across the cytoplasmic membrane), and thus conserves the redox energy in a proton gradient. This subunit may bind ubiquinone.</text>
</comment>
<comment type="catalytic activity">
    <reaction evidence="1">
        <text>a quinone + NADH + 5 H(+)(in) = a quinol + NAD(+) + 4 H(+)(out)</text>
        <dbReference type="Rhea" id="RHEA:57888"/>
        <dbReference type="ChEBI" id="CHEBI:15378"/>
        <dbReference type="ChEBI" id="CHEBI:24646"/>
        <dbReference type="ChEBI" id="CHEBI:57540"/>
        <dbReference type="ChEBI" id="CHEBI:57945"/>
        <dbReference type="ChEBI" id="CHEBI:132124"/>
    </reaction>
</comment>
<comment type="subunit">
    <text evidence="1">NDH-1 is composed of 14 different subunits. Subunits NuoA, H, J, K, L, M, N constitute the membrane sector of the complex.</text>
</comment>
<comment type="subcellular location">
    <subcellularLocation>
        <location evidence="1">Cell inner membrane</location>
        <topology evidence="1">Multi-pass membrane protein</topology>
    </subcellularLocation>
</comment>
<comment type="similarity">
    <text evidence="1">Belongs to the complex I subunit 1 family.</text>
</comment>
<feature type="chain" id="PRO_0000244956" description="NADH-quinone oxidoreductase subunit H">
    <location>
        <begin position="1"/>
        <end position="345"/>
    </location>
</feature>
<feature type="transmembrane region" description="Helical" evidence="1">
    <location>
        <begin position="14"/>
        <end position="34"/>
    </location>
</feature>
<feature type="transmembrane region" description="Helical" evidence="1">
    <location>
        <begin position="84"/>
        <end position="104"/>
    </location>
</feature>
<feature type="transmembrane region" description="Helical" evidence="1">
    <location>
        <begin position="115"/>
        <end position="135"/>
    </location>
</feature>
<feature type="transmembrane region" description="Helical" evidence="1">
    <location>
        <begin position="161"/>
        <end position="181"/>
    </location>
</feature>
<feature type="transmembrane region" description="Helical" evidence="1">
    <location>
        <begin position="187"/>
        <end position="207"/>
    </location>
</feature>
<feature type="transmembrane region" description="Helical" evidence="1">
    <location>
        <begin position="248"/>
        <end position="268"/>
    </location>
</feature>
<feature type="transmembrane region" description="Helical" evidence="1">
    <location>
        <begin position="277"/>
        <end position="297"/>
    </location>
</feature>
<feature type="transmembrane region" description="Helical" evidence="1">
    <location>
        <begin position="309"/>
        <end position="329"/>
    </location>
</feature>
<keyword id="KW-0997">Cell inner membrane</keyword>
<keyword id="KW-1003">Cell membrane</keyword>
<keyword id="KW-0472">Membrane</keyword>
<keyword id="KW-0520">NAD</keyword>
<keyword id="KW-0874">Quinone</keyword>
<keyword id="KW-1185">Reference proteome</keyword>
<keyword id="KW-1278">Translocase</keyword>
<keyword id="KW-0812">Transmembrane</keyword>
<keyword id="KW-1133">Transmembrane helix</keyword>
<keyword id="KW-0830">Ubiquinone</keyword>